<sequence length="172" mass="18171">MLDAFAKVVAQADARGEFLSNTQIDALSKMVKEGNQRLDIVNKVTSNASAIVTNSARALFAEQPQLIQPGGNAYTSRNMAACLRDMEIVLRYVSYAMLAGDSSVLDDRCLNGLRETYQALGTPGSSVAVAIQKMKDASVALANDTTGTPIGDCSSLVAELAGYFDRAAVSVV</sequence>
<geneLocation type="chloroplast"/>
<organism>
    <name type="scientific">Porphyridium purpureum</name>
    <name type="common">Red alga</name>
    <name type="synonym">Porphyridium cruentum</name>
    <dbReference type="NCBI Taxonomy" id="35688"/>
    <lineage>
        <taxon>Eukaryota</taxon>
        <taxon>Rhodophyta</taxon>
        <taxon>Bangiophyceae</taxon>
        <taxon>Porphyridiales</taxon>
        <taxon>Porphyridiaceae</taxon>
        <taxon>Porphyridium</taxon>
    </lineage>
</organism>
<keyword id="KW-0002">3D-structure</keyword>
<keyword id="KW-0042">Antenna complex</keyword>
<keyword id="KW-0089">Bile pigment</keyword>
<keyword id="KW-0150">Chloroplast</keyword>
<keyword id="KW-0157">Chromophore</keyword>
<keyword id="KW-0903">Direct protein sequencing</keyword>
<keyword id="KW-0249">Electron transport</keyword>
<keyword id="KW-0472">Membrane</keyword>
<keyword id="KW-0488">Methylation</keyword>
<keyword id="KW-0602">Photosynthesis</keyword>
<keyword id="KW-0605">Phycobilisome</keyword>
<keyword id="KW-0934">Plastid</keyword>
<keyword id="KW-0793">Thylakoid</keyword>
<keyword id="KW-0813">Transport</keyword>
<gene>
    <name type="primary">rpcB</name>
    <name type="synonym">cpcB</name>
</gene>
<feature type="chain" id="PRO_0000199163" description="R-phycocyanin-1 beta chain">
    <location>
        <begin position="1"/>
        <end position="172"/>
    </location>
</feature>
<feature type="binding site" description="covalent" evidence="2 5">
    <location>
        <position position="82"/>
    </location>
    <ligand>
        <name>(2R,3E)-phycocyanobilin</name>
        <dbReference type="ChEBI" id="CHEBI:85275"/>
    </ligand>
</feature>
<feature type="binding site" description="covalent" evidence="2 5">
    <location>
        <position position="153"/>
    </location>
    <ligand>
        <name>(2R,3E)-phycoerythrobilin</name>
        <dbReference type="ChEBI" id="CHEBI:85276"/>
    </ligand>
</feature>
<feature type="modified residue" description="N4-methylasparagine" evidence="3">
    <location>
        <position position="72"/>
    </location>
</feature>
<name>PHCB_PORPP</name>
<evidence type="ECO:0000250" key="1">
    <source>
        <dbReference type="UniProtKB" id="P00311"/>
    </source>
</evidence>
<evidence type="ECO:0000250" key="2">
    <source>
        <dbReference type="UniProtKB" id="P59859"/>
    </source>
</evidence>
<evidence type="ECO:0000269" key="3">
    <source>
    </source>
</evidence>
<evidence type="ECO:0000305" key="4"/>
<evidence type="ECO:0000305" key="5">
    <source>
    </source>
</evidence>
<comment type="function">
    <text>Light-harvesting photosynthetic bile pigment-protein from the phycobiliprotein complex (phycobilisome, PBS). Phycocyanin is the major phycobiliprotein in the PBS rod.</text>
</comment>
<comment type="subunit">
    <text evidence="1 3">Heterodimer of an alpha and a beta chain (PubMed:8168545). Dimers further assemble into trimers and the trimers into hexamers. The basic functional unit of phycobiliproteins is a ring-shaped hexamer formed from two back-to-back trimers contacting via the alpha chain subunits. The trimers are composed of alpha/beta subunit heterodimers arranged around a three-fold axis of symmetry. The phycoerythrins also contain a gamma subunit which is located in the center of the hexamer (By similarity).</text>
</comment>
<comment type="subcellular location">
    <subcellularLocation>
        <location>Plastid</location>
        <location>Chloroplast thylakoid membrane</location>
        <topology>Peripheral membrane protein</topology>
        <orientation>Stromal side</orientation>
    </subcellularLocation>
    <text evidence="3">Part of the phycobilisome rod.</text>
</comment>
<comment type="PTM">
    <text evidence="3">Contains two covalently linked bilin chromophores.</text>
</comment>
<comment type="similarity">
    <text evidence="4">Belongs to the phycobiliprotein family.</text>
</comment>
<reference key="1">
    <citation type="journal article" date="1994" name="Eur. J. Biochem.">
        <title>The complete amino acid sequence of R-phycocyanin-I alpha and beta subunits from the red alga Porphyridium cruentum. Structural and phylogenetic relationships of the phycocyanins within the phycobiliprotein families.</title>
        <authorList>
            <person name="Ducret A."/>
            <person name="Sidler W."/>
            <person name="Frank G."/>
            <person name="Zuber H."/>
        </authorList>
    </citation>
    <scope>PROTEIN SEQUENCE</scope>
    <scope>SUBUNIT</scope>
    <scope>SUBCELLULAR LOCATION</scope>
    <scope>CHROMOPHORES</scope>
    <scope>METHYLATION AT ASN-72</scope>
    <source>
        <strain>1380-1A</strain>
    </source>
</reference>
<protein>
    <recommendedName>
        <fullName>R-phycocyanin-1 beta chain</fullName>
    </recommendedName>
    <alternativeName>
        <fullName>R-phycocyanin I beta chain</fullName>
    </alternativeName>
</protein>
<proteinExistence type="evidence at protein level"/>
<accession>P37208</accession>
<dbReference type="PIR" id="S43239">
    <property type="entry name" value="S43239"/>
</dbReference>
<dbReference type="PDB" id="7Y4L">
    <property type="method" value="EM"/>
    <property type="resolution" value="3.30 A"/>
    <property type="chains" value="D2/D6/DB/DC/DD/DE/F2/F6/FB/FC/FD/FE/H2/H6/HB/HC/HD/HE/J2/J6/JB/JC/JD/JE/L2/L6/LB/LC/LD/LE=1-172"/>
</dbReference>
<dbReference type="PDB" id="7Y5E">
    <property type="method" value="EM"/>
    <property type="resolution" value="3.30 A"/>
    <property type="chains" value="D1/D4/DE/DG/DH/DO/F1/F4/FE/FG/FH/FO/H1/H4/HE/HG/HH/HO/J1/J4/JE/JG/JH/JO/L1/L4/LE/LG/LH/LO=1-172"/>
</dbReference>
<dbReference type="PDB" id="7Y7A">
    <property type="method" value="EM"/>
    <property type="resolution" value="4.30 A"/>
    <property type="chains" value="D1/D4/D8/DI/DK/DP/DR/DS/De/Dj/Dl/Dn/F1/F4/F8/FI/FK/FP/FR/FS/Fe/Fj/Fl/Fn/H1/H4/H8/HI/HK/HP=1-172"/>
</dbReference>
<dbReference type="PDBsum" id="7Y4L"/>
<dbReference type="PDBsum" id="7Y5E"/>
<dbReference type="PDBsum" id="7Y7A"/>
<dbReference type="SMR" id="P37208"/>
<dbReference type="iPTMnet" id="P37208"/>
<dbReference type="GO" id="GO:0009535">
    <property type="term" value="C:chloroplast thylakoid membrane"/>
    <property type="evidence" value="ECO:0007669"/>
    <property type="project" value="UniProtKB-SubCell"/>
</dbReference>
<dbReference type="GO" id="GO:0030089">
    <property type="term" value="C:phycobilisome"/>
    <property type="evidence" value="ECO:0007669"/>
    <property type="project" value="UniProtKB-KW"/>
</dbReference>
<dbReference type="GO" id="GO:0015979">
    <property type="term" value="P:photosynthesis"/>
    <property type="evidence" value="ECO:0007669"/>
    <property type="project" value="UniProtKB-KW"/>
</dbReference>
<dbReference type="CDD" id="cd14768">
    <property type="entry name" value="PC_PEC_beta"/>
    <property type="match status" value="1"/>
</dbReference>
<dbReference type="Gene3D" id="1.10.490.20">
    <property type="entry name" value="Phycocyanins"/>
    <property type="match status" value="1"/>
</dbReference>
<dbReference type="InterPro" id="IPR009050">
    <property type="entry name" value="Globin-like_sf"/>
</dbReference>
<dbReference type="InterPro" id="IPR012128">
    <property type="entry name" value="Phycobilisome_asu/bsu"/>
</dbReference>
<dbReference type="InterPro" id="IPR038719">
    <property type="entry name" value="Phycobilisome_asu/bsu_sf"/>
</dbReference>
<dbReference type="InterPro" id="IPR006247">
    <property type="entry name" value="Phycocyanin_b"/>
</dbReference>
<dbReference type="NCBIfam" id="TIGR01339">
    <property type="entry name" value="phycocy_beta"/>
    <property type="match status" value="1"/>
</dbReference>
<dbReference type="PANTHER" id="PTHR34011:SF7">
    <property type="entry name" value="C-PHYCOCYANIN BETA SUBUNIT"/>
    <property type="match status" value="1"/>
</dbReference>
<dbReference type="PANTHER" id="PTHR34011">
    <property type="entry name" value="PHYCOBILISOME 32.1 KDA LINKER POLYPEPTIDE, PHYCOCYANIN-ASSOCIATED, ROD 2-RELATED"/>
    <property type="match status" value="1"/>
</dbReference>
<dbReference type="Pfam" id="PF00502">
    <property type="entry name" value="Phycobilisome"/>
    <property type="match status" value="1"/>
</dbReference>
<dbReference type="PIRSF" id="PIRSF000081">
    <property type="entry name" value="Phycocyanin"/>
    <property type="match status" value="1"/>
</dbReference>
<dbReference type="SUPFAM" id="SSF46458">
    <property type="entry name" value="Globin-like"/>
    <property type="match status" value="1"/>
</dbReference>